<evidence type="ECO:0000250" key="1">
    <source>
        <dbReference type="UniProtKB" id="P02452"/>
    </source>
</evidence>
<evidence type="ECO:0000250" key="2">
    <source>
        <dbReference type="UniProtKB" id="P02454"/>
    </source>
</evidence>
<evidence type="ECO:0000250" key="3">
    <source>
        <dbReference type="UniProtKB" id="P02457"/>
    </source>
</evidence>
<evidence type="ECO:0000250" key="4">
    <source>
        <dbReference type="UniProtKB" id="P11087"/>
    </source>
</evidence>
<evidence type="ECO:0000256" key="5">
    <source>
        <dbReference type="SAM" id="MobiDB-lite"/>
    </source>
</evidence>
<evidence type="ECO:0000269" key="6">
    <source>
    </source>
</evidence>
<evidence type="ECO:0000303" key="7">
    <source>
    </source>
</evidence>
<evidence type="ECO:0000305" key="8"/>
<organism evidence="7">
    <name type="scientific">Bradypus variegatus</name>
    <name type="common">Brown-throated three-fingered sloth</name>
    <dbReference type="NCBI Taxonomy" id="9355"/>
    <lineage>
        <taxon>Eukaryota</taxon>
        <taxon>Metazoa</taxon>
        <taxon>Chordata</taxon>
        <taxon>Craniata</taxon>
        <taxon>Vertebrata</taxon>
        <taxon>Euteleostomi</taxon>
        <taxon>Mammalia</taxon>
        <taxon>Eutheria</taxon>
        <taxon>Xenarthra</taxon>
        <taxon>Pilosa</taxon>
        <taxon>Folivora</taxon>
        <taxon>Bradypodidae</taxon>
        <taxon>Bradypus</taxon>
    </lineage>
</organism>
<dbReference type="GO" id="GO:0031012">
    <property type="term" value="C:extracellular matrix"/>
    <property type="evidence" value="ECO:0007669"/>
    <property type="project" value="TreeGrafter"/>
</dbReference>
<dbReference type="GO" id="GO:0005615">
    <property type="term" value="C:extracellular space"/>
    <property type="evidence" value="ECO:0007669"/>
    <property type="project" value="TreeGrafter"/>
</dbReference>
<dbReference type="InterPro" id="IPR008160">
    <property type="entry name" value="Collagen"/>
</dbReference>
<dbReference type="InterPro" id="IPR050149">
    <property type="entry name" value="Collagen_superfamily"/>
</dbReference>
<dbReference type="PANTHER" id="PTHR24023">
    <property type="entry name" value="COLLAGEN ALPHA"/>
    <property type="match status" value="1"/>
</dbReference>
<dbReference type="PANTHER" id="PTHR24023:SF1082">
    <property type="entry name" value="COLLAGEN TRIPLE HELIX REPEAT"/>
    <property type="match status" value="1"/>
</dbReference>
<dbReference type="Pfam" id="PF01391">
    <property type="entry name" value="Collagen"/>
    <property type="match status" value="12"/>
</dbReference>
<name>CO1A1_BRAVA</name>
<keyword id="KW-0903">Direct protein sequencing</keyword>
<keyword id="KW-0272">Extracellular matrix</keyword>
<keyword id="KW-0325">Glycoprotein</keyword>
<keyword id="KW-0379">Hydroxylation</keyword>
<keyword id="KW-0597">Phosphoprotein</keyword>
<keyword id="KW-0964">Secreted</keyword>
<reference evidence="8" key="1">
    <citation type="journal article" date="2019" name="Nat. Ecol. Evol.">
        <title>Palaeoproteomics resolves sloth relationships.</title>
        <authorList>
            <person name="Presslee S."/>
            <person name="Slater G.J."/>
            <person name="Pujos F."/>
            <person name="Forasiepi A.M."/>
            <person name="Fischer R."/>
            <person name="Molloy K."/>
            <person name="Mackie M."/>
            <person name="Olsen J.V."/>
            <person name="Kramarz A."/>
            <person name="Taglioretti M."/>
            <person name="Scaglia F."/>
            <person name="Lezcano M."/>
            <person name="Lanata J.L."/>
            <person name="Southon J."/>
            <person name="Feranec R."/>
            <person name="Bloch J."/>
            <person name="Hajduk A."/>
            <person name="Martin F.M."/>
            <person name="Salas Gismondi R."/>
            <person name="Reguero M."/>
            <person name="de Muizon C."/>
            <person name="Greenwood A."/>
            <person name="Chait B.T."/>
            <person name="Penkman K."/>
            <person name="Collins M."/>
            <person name="MacPhee R.D.E."/>
        </authorList>
    </citation>
    <scope>PROTEIN SEQUENCE</scope>
    <scope>IDENTIFICATION BY MASS SPECTROMETRY</scope>
    <source>
        <tissue evidence="7">Bone</tissue>
    </source>
</reference>
<proteinExistence type="evidence at protein level"/>
<accession>C0HLG9</accession>
<comment type="function">
    <text evidence="8">Type I collagen is a member of group I collagen (fibrillar forming collagen).</text>
</comment>
<comment type="subunit">
    <text evidence="8">Trimers of one alpha 2(I) and two alpha 1(I) chains.</text>
</comment>
<comment type="subcellular location">
    <subcellularLocation>
        <location>Secreted</location>
    </subcellularLocation>
    <subcellularLocation>
        <location>Secreted</location>
        <location>Extracellular space</location>
    </subcellularLocation>
    <subcellularLocation>
        <location evidence="8">Secreted</location>
        <location evidence="8">Extracellular space</location>
        <location evidence="8">Extracellular matrix</location>
    </subcellularLocation>
</comment>
<comment type="tissue specificity">
    <text evidence="6">Expressed in bones.</text>
</comment>
<comment type="PTM">
    <text evidence="1">Contains mostly 4-hydroxyproline. Proline residues at the third position of the tripeptide repeating unit (G-X-Y) are hydroxylated in some or all of the chains.</text>
</comment>
<comment type="PTM">
    <text evidence="4">Contains 3-hydroxyproline at a few sites. This modification occurs on the first proline residue in the sequence motif Gly-Pro-Hyp, where Hyp is 4-hydroxyproline.</text>
</comment>
<comment type="PTM">
    <text evidence="1">Lysine residues at the third position of the tripeptide repeating unit (G-X-Y) are 5-hydroxylated in some or all of the chains.</text>
</comment>
<comment type="PTM">
    <text evidence="1">O-glycosylated on hydroxylated lysine residues. The O-linked glycan consists of a Glc-Gal disaccharide.</text>
</comment>
<comment type="similarity">
    <text evidence="1">Belongs to the fibrillar collagen family.</text>
</comment>
<feature type="chain" id="PRO_0000448476" description="Collagen alpha-1(I) chain">
    <location>
        <begin position="1"/>
        <end position="966"/>
    </location>
</feature>
<feature type="region of interest" description="Disordered" evidence="5">
    <location>
        <begin position="1"/>
        <end position="966"/>
    </location>
</feature>
<feature type="compositionally biased region" description="Basic and acidic residues" evidence="5">
    <location>
        <begin position="64"/>
        <end position="78"/>
    </location>
</feature>
<feature type="compositionally biased region" description="Low complexity" evidence="5">
    <location>
        <begin position="114"/>
        <end position="130"/>
    </location>
</feature>
<feature type="compositionally biased region" description="Low complexity" evidence="5">
    <location>
        <begin position="148"/>
        <end position="166"/>
    </location>
</feature>
<feature type="compositionally biased region" description="Pro residues" evidence="5">
    <location>
        <begin position="168"/>
        <end position="180"/>
    </location>
</feature>
<feature type="compositionally biased region" description="Low complexity" evidence="5">
    <location>
        <begin position="214"/>
        <end position="253"/>
    </location>
</feature>
<feature type="compositionally biased region" description="Gly residues" evidence="5">
    <location>
        <begin position="320"/>
        <end position="329"/>
    </location>
</feature>
<feature type="compositionally biased region" description="Low complexity" evidence="5">
    <location>
        <begin position="373"/>
        <end position="399"/>
    </location>
</feature>
<feature type="compositionally biased region" description="Low complexity" evidence="5">
    <location>
        <begin position="408"/>
        <end position="427"/>
    </location>
</feature>
<feature type="compositionally biased region" description="Low complexity" evidence="5">
    <location>
        <begin position="469"/>
        <end position="496"/>
    </location>
</feature>
<feature type="compositionally biased region" description="Low complexity" evidence="5">
    <location>
        <begin position="608"/>
        <end position="622"/>
    </location>
</feature>
<feature type="compositionally biased region" description="Low complexity" evidence="5">
    <location>
        <begin position="635"/>
        <end position="662"/>
    </location>
</feature>
<feature type="compositionally biased region" description="Pro residues" evidence="5">
    <location>
        <begin position="664"/>
        <end position="676"/>
    </location>
</feature>
<feature type="compositionally biased region" description="Low complexity" evidence="5">
    <location>
        <begin position="691"/>
        <end position="707"/>
    </location>
</feature>
<feature type="compositionally biased region" description="Low complexity" evidence="5">
    <location>
        <begin position="736"/>
        <end position="755"/>
    </location>
</feature>
<feature type="compositionally biased region" description="Pro residues" evidence="5">
    <location>
        <begin position="805"/>
        <end position="815"/>
    </location>
</feature>
<feature type="compositionally biased region" description="Gly residues" evidence="5">
    <location>
        <begin position="824"/>
        <end position="835"/>
    </location>
</feature>
<feature type="compositionally biased region" description="Low complexity" evidence="5">
    <location>
        <begin position="852"/>
        <end position="866"/>
    </location>
</feature>
<feature type="compositionally biased region" description="Basic and acidic residues" evidence="5">
    <location>
        <begin position="867"/>
        <end position="881"/>
    </location>
</feature>
<feature type="compositionally biased region" description="Low complexity" evidence="5">
    <location>
        <begin position="900"/>
        <end position="933"/>
    </location>
</feature>
<feature type="compositionally biased region" description="Pro residues" evidence="5">
    <location>
        <begin position="951"/>
        <end position="966"/>
    </location>
</feature>
<feature type="modified residue" description="Allysine" evidence="1">
    <location>
        <position position="7"/>
    </location>
</feature>
<feature type="modified residue" description="Phosphoserine" evidence="2">
    <location>
        <position position="8"/>
    </location>
</feature>
<feature type="modified residue" description="4-hydroxyproline" evidence="3">
    <location>
        <position position="27"/>
    </location>
</feature>
<feature type="modified residue" description="4-hydroxyproline" evidence="3">
    <location>
        <position position="30"/>
    </location>
</feature>
<feature type="modified residue" description="4-hydroxyproline" evidence="3">
    <location>
        <position position="32"/>
    </location>
</feature>
<feature type="modified residue" description="4-hydroxyproline" evidence="3">
    <location>
        <position position="41"/>
    </location>
</feature>
<feature type="modified residue" description="4-hydroxyproline" evidence="3">
    <location>
        <position position="44"/>
    </location>
</feature>
<feature type="modified residue" description="4-hydroxyproline" evidence="3">
    <location>
        <position position="47"/>
    </location>
</feature>
<feature type="modified residue" description="4-hydroxyproline" evidence="3">
    <location>
        <position position="61"/>
    </location>
</feature>
<feature type="modified residue" description="4-hydroxyproline" evidence="3">
    <location>
        <position position="76"/>
    </location>
</feature>
<feature type="modified residue" description="4-hydroxyproline" evidence="3">
    <location>
        <position position="82"/>
    </location>
</feature>
<feature type="modified residue" description="4-hydroxyproline" evidence="3">
    <location>
        <position position="91"/>
    </location>
</feature>
<feature type="modified residue" description="4-hydroxyproline" evidence="3">
    <location>
        <position position="97"/>
    </location>
</feature>
<feature type="modified residue" description="5-hydroxylysine; alternate" evidence="1">
    <location>
        <position position="100"/>
    </location>
</feature>
<feature type="modified residue" description="Phosphoserine" evidence="2">
    <location>
        <position position="106"/>
    </location>
</feature>
<feature type="modified residue" description="4-hydroxyproline" evidence="3">
    <location>
        <position position="124"/>
    </location>
</feature>
<feature type="modified residue" description="4-hydroxyproline" evidence="3">
    <location>
        <position position="127"/>
    </location>
</feature>
<feature type="modified residue" description="4-hydroxyproline" evidence="3">
    <location>
        <position position="133"/>
    </location>
</feature>
<feature type="modified residue" description="4-hydroxyproline" evidence="3">
    <location>
        <position position="142"/>
    </location>
</feature>
<feature type="modified residue" description="4-hydroxyproline" evidence="3">
    <location>
        <position position="148"/>
    </location>
</feature>
<feature type="modified residue" description="4-hydroxyproline" evidence="3">
    <location>
        <position position="169"/>
    </location>
</feature>
<feature type="modified residue" description="4-hydroxyproline" evidence="3">
    <location>
        <position position="178"/>
    </location>
</feature>
<feature type="modified residue" description="4-hydroxyproline" evidence="3">
    <location>
        <position position="181"/>
    </location>
</feature>
<feature type="modified residue" description="4-hydroxyproline" evidence="3">
    <location>
        <position position="208"/>
    </location>
</feature>
<feature type="modified residue" description="4-hydroxyproline" evidence="3">
    <location>
        <position position="211"/>
    </location>
</feature>
<feature type="modified residue" description="4-hydroxyproline" evidence="3">
    <location>
        <position position="223"/>
    </location>
</feature>
<feature type="modified residue" description="4-hydroxyproline" evidence="3">
    <location>
        <position position="229"/>
    </location>
</feature>
<feature type="modified residue" description="4-hydroxyproline" evidence="3">
    <location>
        <position position="238"/>
    </location>
</feature>
<feature type="modified residue" description="4-hydroxyproline" evidence="3">
    <location>
        <position position="244"/>
    </location>
</feature>
<feature type="modified residue" description="4-hydroxyproline" evidence="3">
    <location>
        <position position="247"/>
    </location>
</feature>
<feature type="modified residue" description="4-hydroxyproline" evidence="3">
    <location>
        <position position="262"/>
    </location>
</feature>
<feature type="modified residue" description="5-hydroxylysine" evidence="3">
    <location>
        <position position="265"/>
    </location>
</feature>
<feature type="modified residue" description="4-hydroxyproline" evidence="3">
    <location>
        <position position="271"/>
    </location>
</feature>
<feature type="modified residue" description="4-hydroxyproline" evidence="3">
    <location>
        <position position="274"/>
    </location>
</feature>
<feature type="modified residue" description="4-hydroxyproline" evidence="3">
    <location>
        <position position="286"/>
    </location>
</feature>
<feature type="modified residue" description="4-hydroxyproline" evidence="3">
    <location>
        <position position="295"/>
    </location>
</feature>
<feature type="modified residue" description="4-hydroxyproline" evidence="3">
    <location>
        <position position="310"/>
    </location>
</feature>
<feature type="modified residue" description="4-hydroxyproline" evidence="3">
    <location>
        <position position="316"/>
    </location>
</feature>
<feature type="modified residue" description="4-hydroxyproline" evidence="3">
    <location>
        <position position="325"/>
    </location>
</feature>
<feature type="modified residue" description="4-hydroxyproline" evidence="3">
    <location>
        <position position="331"/>
    </location>
</feature>
<feature type="modified residue" description="5-hydroxylysine" evidence="3">
    <location>
        <position position="340"/>
    </location>
</feature>
<feature type="modified residue" description="4-hydroxyproline" evidence="3">
    <location>
        <position position="349"/>
    </location>
</feature>
<feature type="modified residue" description="4-hydroxyproline" evidence="3">
    <location>
        <position position="358"/>
    </location>
</feature>
<feature type="modified residue" description="4-hydroxyproline" evidence="3">
    <location>
        <position position="364"/>
    </location>
</feature>
<feature type="modified residue" description="4-hydroxyproline" evidence="3">
    <location>
        <position position="370"/>
    </location>
</feature>
<feature type="modified residue" description="4-hydroxyproline" evidence="3">
    <location>
        <position position="379"/>
    </location>
</feature>
<feature type="modified residue" description="4-hydroxyproline" evidence="3">
    <location>
        <position position="382"/>
    </location>
</feature>
<feature type="modified residue" description="4-hydroxyproline" evidence="3">
    <location>
        <position position="391"/>
    </location>
</feature>
<feature type="modified residue" description="4-hydroxyproline" evidence="3">
    <location>
        <position position="400"/>
    </location>
</feature>
<feature type="modified residue" description="4-hydroxyproline" evidence="3">
    <location>
        <position position="406"/>
    </location>
</feature>
<feature type="modified residue" description="4-hydroxyproline" evidence="3">
    <location>
        <position position="418"/>
    </location>
</feature>
<feature type="modified residue" description="4-hydroxyproline" evidence="3">
    <location>
        <position position="427"/>
    </location>
</feature>
<feature type="modified residue" description="4-hydroxyproline" evidence="3">
    <location>
        <position position="436"/>
    </location>
</feature>
<feature type="modified residue" description="4-hydroxyproline" evidence="3">
    <location>
        <position position="439"/>
    </location>
</feature>
<feature type="modified residue" description="4-hydroxyproline" evidence="3">
    <location>
        <position position="457"/>
    </location>
</feature>
<feature type="modified residue" description="4-hydroxyproline" evidence="3">
    <location>
        <position position="475"/>
    </location>
</feature>
<feature type="modified residue" description="4-hydroxyproline" evidence="3">
    <location>
        <position position="481"/>
    </location>
</feature>
<feature type="modified residue" description="4-hydroxyproline" evidence="3">
    <location>
        <position position="487"/>
    </location>
</feature>
<feature type="modified residue" description="4-hydroxyproline" evidence="3">
    <location>
        <position position="493"/>
    </location>
</feature>
<feature type="modified residue" description="4-hydroxyproline" evidence="3">
    <location>
        <position position="499"/>
    </location>
</feature>
<feature type="modified residue" description="4-hydroxyproline" evidence="3">
    <location>
        <position position="505"/>
    </location>
</feature>
<feature type="modified residue" description="4-hydroxyproline" evidence="3">
    <location>
        <position position="517"/>
    </location>
</feature>
<feature type="modified residue" description="4-hydroxyproline" evidence="3">
    <location>
        <position position="526"/>
    </location>
</feature>
<feature type="modified residue" description="4-hydroxyproline" evidence="3">
    <location>
        <position position="538"/>
    </location>
</feature>
<feature type="modified residue" description="4-hydroxyproline" evidence="3">
    <location>
        <position position="542"/>
    </location>
</feature>
<feature type="modified residue" description="4-hydroxyproline" evidence="3">
    <location>
        <position position="548"/>
    </location>
</feature>
<feature type="modified residue" description="4-hydroxyproline" evidence="3">
    <location>
        <position position="554"/>
    </location>
</feature>
<feature type="modified residue" description="4-hydroxyproline" evidence="3">
    <location>
        <position position="563"/>
    </location>
</feature>
<feature type="modified residue" description="5-hydroxylysine" evidence="3">
    <location>
        <position position="575"/>
    </location>
</feature>
<feature type="modified residue" description="4-hydroxyproline" evidence="3">
    <location>
        <position position="581"/>
    </location>
</feature>
<feature type="modified residue" description="4-hydroxyproline" evidence="3">
    <location>
        <position position="596"/>
    </location>
</feature>
<feature type="modified residue" description="4-hydroxyproline" evidence="3">
    <location>
        <position position="602"/>
    </location>
</feature>
<feature type="modified residue" description="Phosphoserine" evidence="2">
    <location>
        <position position="611"/>
    </location>
</feature>
<feature type="modified residue" description="4-hydroxyproline" evidence="3">
    <location>
        <position position="623"/>
    </location>
</feature>
<feature type="modified residue" description="4-hydroxyproline" evidence="3">
    <location>
        <position position="629"/>
    </location>
</feature>
<feature type="modified residue" description="4-hydroxyproline" evidence="3">
    <location>
        <position position="632"/>
    </location>
</feature>
<feature type="modified residue" description="4-hydroxyproline" evidence="3">
    <location>
        <position position="641"/>
    </location>
</feature>
<feature type="modified residue" description="4-hydroxyproline" evidence="3">
    <location>
        <position position="647"/>
    </location>
</feature>
<feature type="modified residue" description="4-hydroxyproline" evidence="3">
    <location>
        <position position="665"/>
    </location>
</feature>
<feature type="modified residue" description="4-hydroxyproline" evidence="3">
    <location>
        <position position="674"/>
    </location>
</feature>
<feature type="modified residue" description="4-hydroxyproline" evidence="3">
    <location>
        <position position="683"/>
    </location>
</feature>
<feature type="modified residue" description="5-hydroxylysine" evidence="3">
    <location>
        <position position="686"/>
    </location>
</feature>
<feature type="modified residue" description="4-hydroxyproline" evidence="3">
    <location>
        <position position="695"/>
    </location>
</feature>
<feature type="modified residue" description="4-hydroxyproline" evidence="3">
    <location>
        <position position="701"/>
    </location>
</feature>
<feature type="modified residue" description="3-hydroxyproline" evidence="4">
    <location>
        <position position="709"/>
    </location>
</feature>
<feature type="modified residue" description="4-hydroxyproline" evidence="4">
    <location>
        <position position="710"/>
    </location>
</feature>
<feature type="modified residue" description="4-hydroxyproline" evidence="4">
    <location>
        <position position="719"/>
    </location>
</feature>
<feature type="modified residue" description="4-hydroxyproline" evidence="4">
    <location>
        <position position="722"/>
    </location>
</feature>
<feature type="modified residue" description="4-hydroxyproline" evidence="3">
    <location>
        <position position="746"/>
    </location>
</feature>
<feature type="modified residue" description="4-hydroxyproline" evidence="3">
    <location>
        <position position="755"/>
    </location>
</feature>
<feature type="modified residue" description="4-hydroxyproline" evidence="3">
    <location>
        <position position="773"/>
    </location>
</feature>
<feature type="modified residue" description="4-hydroxyproline" evidence="3">
    <location>
        <position position="782"/>
    </location>
</feature>
<feature type="modified residue" description="4-hydroxyproline" evidence="3">
    <location>
        <position position="785"/>
    </location>
</feature>
<feature type="modified residue" description="4-hydroxyproline" evidence="3">
    <location>
        <position position="791"/>
    </location>
</feature>
<feature type="modified residue" description="4-hydroxyproline" evidence="3">
    <location>
        <position position="806"/>
    </location>
</feature>
<feature type="modified residue" description="4-hydroxyproline" evidence="3">
    <location>
        <position position="812"/>
    </location>
</feature>
<feature type="modified residue" description="4-hydroxyproline" evidence="3">
    <location>
        <position position="818"/>
    </location>
</feature>
<feature type="modified residue" description="4-hydroxyproline" evidence="3">
    <location>
        <position position="826"/>
    </location>
</feature>
<feature type="modified residue" description="4-hydroxyproline" evidence="3">
    <location>
        <position position="832"/>
    </location>
</feature>
<feature type="modified residue" description="5-hydroxylysine" evidence="3">
    <location>
        <position position="870"/>
    </location>
</feature>
<feature type="modified residue" description="5-hydroxylysine; alternate" evidence="3">
    <location>
        <position position="882"/>
    </location>
</feature>
<feature type="modified residue" description="4-hydroxyproline" evidence="3">
    <location>
        <position position="897"/>
    </location>
</feature>
<feature type="modified residue" description="4-hydroxyproline" evidence="3">
    <location>
        <position position="900"/>
    </location>
</feature>
<feature type="modified residue" description="4-hydroxyproline" evidence="3">
    <location>
        <position position="918"/>
    </location>
</feature>
<feature type="modified residue" description="4-hydroxyproline" evidence="4">
    <location>
        <position position="933"/>
    </location>
</feature>
<feature type="modified residue" description="3-hydroxyproline" evidence="4">
    <location>
        <position position="938"/>
    </location>
</feature>
<feature type="modified residue" description="4-hydroxyproline" evidence="4">
    <location>
        <position position="939"/>
    </location>
</feature>
<feature type="modified residue" description="3-hydroxyproline" evidence="4">
    <location>
        <position position="953"/>
    </location>
</feature>
<feature type="modified residue" description="4-hydroxyproline" evidence="4">
    <location>
        <position position="954"/>
    </location>
</feature>
<feature type="modified residue" description="3-hydroxyproline" evidence="4">
    <location>
        <position position="956"/>
    </location>
</feature>
<feature type="modified residue" description="4-hydroxyproline" evidence="4">
    <location>
        <position position="957"/>
    </location>
</feature>
<feature type="modified residue" description="3-hydroxyproline" evidence="4">
    <location>
        <position position="959"/>
    </location>
</feature>
<feature type="modified residue" description="4-hydroxyproline" evidence="4">
    <location>
        <position position="960"/>
    </location>
</feature>
<feature type="modified residue" description="4-hydroxyproline" evidence="4">
    <location>
        <position position="963"/>
    </location>
</feature>
<feature type="modified residue" description="4-hydroxyproline" evidence="4">
    <location>
        <position position="966"/>
    </location>
</feature>
<feature type="glycosylation site" description="O-linked (Gal...) hydroxylysine; alternate" evidence="1">
    <location>
        <position position="100"/>
    </location>
</feature>
<feature type="glycosylation site" description="O-linked (Gal...) hydroxylysine; alternate" evidence="3">
    <location>
        <position position="882"/>
    </location>
</feature>
<feature type="unsure residue" description="I or L" evidence="6">
    <location>
        <position position="12"/>
    </location>
</feature>
<feature type="unsure residue" description="L or I" evidence="6">
    <location>
        <position position="26"/>
    </location>
</feature>
<feature type="unsure residue" description="L or I" evidence="6">
    <location>
        <position position="90"/>
    </location>
</feature>
<feature type="unsure residue" description="L or I" evidence="6">
    <location>
        <position position="96"/>
    </location>
</feature>
<feature type="unsure residue" description="L or I" evidence="6">
    <location>
        <position position="108"/>
    </location>
</feature>
<feature type="unsure residue" description="L or I" evidence="6">
    <location>
        <position position="141"/>
    </location>
</feature>
<feature type="unsure residue" description="I or L" evidence="6">
    <location>
        <position position="240"/>
    </location>
</feature>
<feature type="unsure residue" description="I or L" evidence="6">
    <location>
        <position position="291"/>
    </location>
</feature>
<feature type="unsure residue" description="L or I" evidence="6">
    <location>
        <position position="315"/>
    </location>
</feature>
<feature type="unsure residue" description="L or I" evidence="6">
    <location>
        <position position="369"/>
    </location>
</feature>
<feature type="unsure residue" description="L or I" evidence="6">
    <location>
        <position position="375"/>
    </location>
</feature>
<feature type="unsure residue" description="L or I" evidence="6">
    <location>
        <position position="480"/>
    </location>
</feature>
<feature type="unsure residue" description="L or I" evidence="6">
    <location>
        <position position="502"/>
    </location>
</feature>
<feature type="unsure residue" description="L or I" evidence="6">
    <location>
        <position position="550"/>
    </location>
</feature>
<feature type="unsure residue" description="L or I" evidence="6">
    <location>
        <position position="562"/>
    </location>
</feature>
<feature type="unsure residue" description="L or I" evidence="6">
    <location>
        <position position="589"/>
    </location>
</feature>
<feature type="unsure residue" description="I or L" evidence="6">
    <location>
        <position position="593"/>
    </location>
</feature>
<feature type="unsure residue" description="I or L" evidence="6">
    <location>
        <position position="677"/>
    </location>
</feature>
<feature type="unsure residue" description="I or L" evidence="6">
    <location>
        <position position="763"/>
    </location>
</feature>
<feature type="unsure residue" description="L or I" evidence="6">
    <location>
        <position position="772"/>
    </location>
</feature>
<feature type="unsure residue" description="L or I" evidence="6">
    <location>
        <position position="784"/>
    </location>
</feature>
<feature type="unsure residue" description="L or I" evidence="6">
    <location>
        <position position="814"/>
    </location>
</feature>
<feature type="unsure residue" description="I or L" evidence="6">
    <location>
        <position position="881"/>
    </location>
</feature>
<feature type="unsure residue" description="L or I" evidence="6">
    <location>
        <position position="890"/>
    </location>
</feature>
<feature type="unsure residue" description="L or I" evidence="6">
    <location>
        <position position="929"/>
    </location>
</feature>
<feature type="unsure residue" description="L or I" evidence="6">
    <location>
        <position position="932"/>
    </location>
</feature>
<feature type="unsure residue" description="I or L" evidence="6">
    <location>
        <position position="936"/>
    </location>
</feature>
<feature type="non-consecutive residues" evidence="7">
    <location>
        <begin position="31"/>
        <end position="32"/>
    </location>
</feature>
<feature type="non-consecutive residues" evidence="7">
    <location>
        <begin position="539"/>
        <end position="540"/>
    </location>
</feature>
<feature type="non-consecutive residues" evidence="7">
    <location>
        <begin position="740"/>
        <end position="741"/>
    </location>
</feature>
<feature type="non-consecutive residues" evidence="7">
    <location>
        <begin position="825"/>
        <end position="826"/>
    </location>
</feature>
<feature type="non-consecutive residues" evidence="7">
    <location>
        <begin position="834"/>
        <end position="835"/>
    </location>
</feature>
<feature type="non-terminal residue" evidence="7">
    <location>
        <position position="1"/>
    </location>
</feature>
<feature type="non-terminal residue" evidence="7">
    <location>
        <position position="966"/>
    </location>
</feature>
<sequence length="966" mass="86333">SYGYDEKSAGGISVPGPMGPSGPRGLPGPPGPGPQGFQGPPGEPGEPGSGPMGPRGPPGPPGKNGDDGEAGKPGRPGERGPPGPQGARGLPGTAGLPGMKGHRGFSGLDGAKGDAGPAGPKGEPGSPGENGAPGQMGPRGLPGERGRPGASGPAGARGNDGATGAAGPPGPTGPAGPPGFPGAVGAKGEAGPQGARGSEGPQGVRGEPGPPGPAGAAGPAGNPGADGQPGAKGANGAPGIAGAPGFPGARGPSGPQGPSGPPGPKGNSGEPGAPGNKGDTGAKGEPGPTGIQGPPGPAGEEGKRGARGEPGPTGLPGPPGERGGPGSRGFPGADGVAGPKGPAGERGSPGPAGPKGSPGEAGRPGEAGLPGAKGLTGSPGSPGPDGKTGPPGPAGQDGRPGPPGPPGARGQAGVMGFPGPKGAAGEPGKAGERGVPGPPGAVGPAGKDGEAGAQGPPGPAGPAGERGEQGPAGSPGFQGLPGPAGPPGEAGKPGEQGVPGDLGAPGPSGARGERGFPGERGVQGPPGPAGPRGSNGAPGGAPGSQGAPGLQGMPGERGAAGLPGPKGDRGDAGPKGTDGAPGKDGVRGLTGPIGPPGPAGAPGDKGESGPSGPAGPTGARGAPGDRGEPGPPGPAGFAGPPGADGQPGAKGEPGDAGAKGDAGPPGPAGPTGPPGPIGNVGAPGPKGARGSAGPPGATGFPGAAGRVGPPGPSGNAGPPGPPGPVGKEGGKGPRGETGPAGEKGSPGADGPAGAPGTPGPQGISGQRGVVGLPGQRGERGFPGLPGPSGEPGKQGPSGSSGERGPPGPVGPPGLAGPPGESGREGPGAEGSPGRGKNGDRGETGPAGPAGPAGPAGARGPAGPQGPRGDKGETGEQGDRGIKGHRGFSGLQGPAGPPGSPGEQGPSGASGPAGPRGPPGSAGSPGKDGLNGLPGPIGPPGPRGRTGDAGPVGPPGPPGPPGPPGPP</sequence>
<protein>
    <recommendedName>
        <fullName evidence="7">Collagen alpha-1(I) chain</fullName>
    </recommendedName>
    <alternativeName>
        <fullName evidence="1">Alpha-1 type I collagen</fullName>
    </alternativeName>
</protein>